<proteinExistence type="inferred from homology"/>
<protein>
    <recommendedName>
        <fullName evidence="1">Phosphoribosylformylglycinamidine cyclo-ligase</fullName>
        <ecNumber evidence="1">6.3.3.1</ecNumber>
    </recommendedName>
    <alternativeName>
        <fullName evidence="1">AIR synthase</fullName>
    </alternativeName>
    <alternativeName>
        <fullName evidence="1">AIRS</fullName>
    </alternativeName>
    <alternativeName>
        <fullName evidence="1">Phosphoribosyl-aminoimidazole synthetase</fullName>
    </alternativeName>
</protein>
<keyword id="KW-0067">ATP-binding</keyword>
<keyword id="KW-0963">Cytoplasm</keyword>
<keyword id="KW-0436">Ligase</keyword>
<keyword id="KW-0547">Nucleotide-binding</keyword>
<keyword id="KW-0658">Purine biosynthesis</keyword>
<keyword id="KW-1185">Reference proteome</keyword>
<organism>
    <name type="scientific">Tolumonas auensis (strain DSM 9187 / NBRC 110442 / TA 4)</name>
    <dbReference type="NCBI Taxonomy" id="595494"/>
    <lineage>
        <taxon>Bacteria</taxon>
        <taxon>Pseudomonadati</taxon>
        <taxon>Pseudomonadota</taxon>
        <taxon>Gammaproteobacteria</taxon>
        <taxon>Aeromonadales</taxon>
        <taxon>Aeromonadaceae</taxon>
        <taxon>Tolumonas</taxon>
    </lineage>
</organism>
<reference key="1">
    <citation type="submission" date="2009-05" db="EMBL/GenBank/DDBJ databases">
        <title>Complete sequence of Tolumonas auensis DSM 9187.</title>
        <authorList>
            <consortium name="US DOE Joint Genome Institute"/>
            <person name="Lucas S."/>
            <person name="Copeland A."/>
            <person name="Lapidus A."/>
            <person name="Glavina del Rio T."/>
            <person name="Tice H."/>
            <person name="Bruce D."/>
            <person name="Goodwin L."/>
            <person name="Pitluck S."/>
            <person name="Chertkov O."/>
            <person name="Brettin T."/>
            <person name="Detter J.C."/>
            <person name="Han C."/>
            <person name="Larimer F."/>
            <person name="Land M."/>
            <person name="Hauser L."/>
            <person name="Kyrpides N."/>
            <person name="Mikhailova N."/>
            <person name="Spring S."/>
            <person name="Beller H."/>
        </authorList>
    </citation>
    <scope>NUCLEOTIDE SEQUENCE [LARGE SCALE GENOMIC DNA]</scope>
    <source>
        <strain>DSM 9187 / NBRC 110442 / TA 4</strain>
    </source>
</reference>
<dbReference type="EC" id="6.3.3.1" evidence="1"/>
<dbReference type="EMBL" id="CP001616">
    <property type="protein sequence ID" value="ACQ92544.1"/>
    <property type="molecule type" value="Genomic_DNA"/>
</dbReference>
<dbReference type="RefSeq" id="WP_012729143.1">
    <property type="nucleotide sequence ID" value="NC_012691.1"/>
</dbReference>
<dbReference type="SMR" id="C4LC65"/>
<dbReference type="STRING" id="595494.Tola_0916"/>
<dbReference type="KEGG" id="tau:Tola_0916"/>
<dbReference type="eggNOG" id="COG0150">
    <property type="taxonomic scope" value="Bacteria"/>
</dbReference>
<dbReference type="HOGENOM" id="CLU_047116_0_0_6"/>
<dbReference type="OrthoDB" id="9777881at2"/>
<dbReference type="UniPathway" id="UPA00074">
    <property type="reaction ID" value="UER00129"/>
</dbReference>
<dbReference type="Proteomes" id="UP000009073">
    <property type="component" value="Chromosome"/>
</dbReference>
<dbReference type="GO" id="GO:0005829">
    <property type="term" value="C:cytosol"/>
    <property type="evidence" value="ECO:0007669"/>
    <property type="project" value="TreeGrafter"/>
</dbReference>
<dbReference type="GO" id="GO:0005524">
    <property type="term" value="F:ATP binding"/>
    <property type="evidence" value="ECO:0007669"/>
    <property type="project" value="UniProtKB-KW"/>
</dbReference>
<dbReference type="GO" id="GO:0004637">
    <property type="term" value="F:phosphoribosylamine-glycine ligase activity"/>
    <property type="evidence" value="ECO:0007669"/>
    <property type="project" value="TreeGrafter"/>
</dbReference>
<dbReference type="GO" id="GO:0004641">
    <property type="term" value="F:phosphoribosylformylglycinamidine cyclo-ligase activity"/>
    <property type="evidence" value="ECO:0007669"/>
    <property type="project" value="UniProtKB-UniRule"/>
</dbReference>
<dbReference type="GO" id="GO:0006189">
    <property type="term" value="P:'de novo' IMP biosynthetic process"/>
    <property type="evidence" value="ECO:0007669"/>
    <property type="project" value="UniProtKB-UniRule"/>
</dbReference>
<dbReference type="GO" id="GO:0046084">
    <property type="term" value="P:adenine biosynthetic process"/>
    <property type="evidence" value="ECO:0007669"/>
    <property type="project" value="TreeGrafter"/>
</dbReference>
<dbReference type="CDD" id="cd02196">
    <property type="entry name" value="PurM"/>
    <property type="match status" value="1"/>
</dbReference>
<dbReference type="FunFam" id="3.30.1330.10:FF:000001">
    <property type="entry name" value="Phosphoribosylformylglycinamidine cyclo-ligase"/>
    <property type="match status" value="1"/>
</dbReference>
<dbReference type="FunFam" id="3.90.650.10:FF:000001">
    <property type="entry name" value="Phosphoribosylformylglycinamidine cyclo-ligase"/>
    <property type="match status" value="1"/>
</dbReference>
<dbReference type="Gene3D" id="3.90.650.10">
    <property type="entry name" value="PurM-like C-terminal domain"/>
    <property type="match status" value="1"/>
</dbReference>
<dbReference type="Gene3D" id="3.30.1330.10">
    <property type="entry name" value="PurM-like, N-terminal domain"/>
    <property type="match status" value="1"/>
</dbReference>
<dbReference type="HAMAP" id="MF_00741">
    <property type="entry name" value="AIRS"/>
    <property type="match status" value="1"/>
</dbReference>
<dbReference type="InterPro" id="IPR010918">
    <property type="entry name" value="PurM-like_C_dom"/>
</dbReference>
<dbReference type="InterPro" id="IPR036676">
    <property type="entry name" value="PurM-like_C_sf"/>
</dbReference>
<dbReference type="InterPro" id="IPR016188">
    <property type="entry name" value="PurM-like_N"/>
</dbReference>
<dbReference type="InterPro" id="IPR036921">
    <property type="entry name" value="PurM-like_N_sf"/>
</dbReference>
<dbReference type="InterPro" id="IPR004733">
    <property type="entry name" value="PurM_cligase"/>
</dbReference>
<dbReference type="NCBIfam" id="TIGR00878">
    <property type="entry name" value="purM"/>
    <property type="match status" value="1"/>
</dbReference>
<dbReference type="PANTHER" id="PTHR10520:SF12">
    <property type="entry name" value="TRIFUNCTIONAL PURINE BIOSYNTHETIC PROTEIN ADENOSINE-3"/>
    <property type="match status" value="1"/>
</dbReference>
<dbReference type="PANTHER" id="PTHR10520">
    <property type="entry name" value="TRIFUNCTIONAL PURINE BIOSYNTHETIC PROTEIN ADENOSINE-3-RELATED"/>
    <property type="match status" value="1"/>
</dbReference>
<dbReference type="Pfam" id="PF00586">
    <property type="entry name" value="AIRS"/>
    <property type="match status" value="1"/>
</dbReference>
<dbReference type="Pfam" id="PF02769">
    <property type="entry name" value="AIRS_C"/>
    <property type="match status" value="1"/>
</dbReference>
<dbReference type="SUPFAM" id="SSF56042">
    <property type="entry name" value="PurM C-terminal domain-like"/>
    <property type="match status" value="1"/>
</dbReference>
<dbReference type="SUPFAM" id="SSF55326">
    <property type="entry name" value="PurM N-terminal domain-like"/>
    <property type="match status" value="1"/>
</dbReference>
<sequence length="345" mass="36573">MTDKTSLSYKDAGVDIDAGNALVERIKGVAKRTRRPEVMGGLGGFGALCRIPAGYREPILVSGTDGVGTKLRLAIDLKKHDTVGIDLVAMCVNDLIVQGAEPLFFLDYYATGKLDVDTAAAVVTGIGAGCEQSNCALVGGETAEMPGMYEGEDYDMAGFCVGVVEASEIIDGSKVAAGDALIALASSGPHSNGFSLIRKILEVSKADVQQPLGDSTLANALLAPTRIYVKPVLKLLKNCEVHALSHITGGGFWENIPRVLPENTKAVIDGSSWQWPEVFNWLQKSGNVETYEMYRTFNCGVGMIIALPQAQVDAALALLKAEGENAWLIGQIEQAAAGEKQVEIN</sequence>
<name>PUR5_TOLAT</name>
<feature type="chain" id="PRO_1000212832" description="Phosphoribosylformylglycinamidine cyclo-ligase">
    <location>
        <begin position="1"/>
        <end position="345"/>
    </location>
</feature>
<accession>C4LC65</accession>
<evidence type="ECO:0000255" key="1">
    <source>
        <dbReference type="HAMAP-Rule" id="MF_00741"/>
    </source>
</evidence>
<comment type="catalytic activity">
    <reaction evidence="1">
        <text>2-formamido-N(1)-(5-O-phospho-beta-D-ribosyl)acetamidine + ATP = 5-amino-1-(5-phospho-beta-D-ribosyl)imidazole + ADP + phosphate + H(+)</text>
        <dbReference type="Rhea" id="RHEA:23032"/>
        <dbReference type="ChEBI" id="CHEBI:15378"/>
        <dbReference type="ChEBI" id="CHEBI:30616"/>
        <dbReference type="ChEBI" id="CHEBI:43474"/>
        <dbReference type="ChEBI" id="CHEBI:137981"/>
        <dbReference type="ChEBI" id="CHEBI:147287"/>
        <dbReference type="ChEBI" id="CHEBI:456216"/>
        <dbReference type="EC" id="6.3.3.1"/>
    </reaction>
</comment>
<comment type="pathway">
    <text evidence="1">Purine metabolism; IMP biosynthesis via de novo pathway; 5-amino-1-(5-phospho-D-ribosyl)imidazole from N(2)-formyl-N(1)-(5-phospho-D-ribosyl)glycinamide: step 2/2.</text>
</comment>
<comment type="subcellular location">
    <subcellularLocation>
        <location evidence="1">Cytoplasm</location>
    </subcellularLocation>
</comment>
<comment type="similarity">
    <text evidence="1">Belongs to the AIR synthase family.</text>
</comment>
<gene>
    <name evidence="1" type="primary">purM</name>
    <name type="ordered locus">Tola_0916</name>
</gene>